<feature type="chain" id="PRO_1000086345" description="Large ribosomal subunit protein uL2">
    <location>
        <begin position="1"/>
        <end position="273"/>
    </location>
</feature>
<feature type="region of interest" description="Disordered" evidence="2">
    <location>
        <begin position="228"/>
        <end position="273"/>
    </location>
</feature>
<feature type="compositionally biased region" description="Basic residues" evidence="2">
    <location>
        <begin position="254"/>
        <end position="273"/>
    </location>
</feature>
<gene>
    <name evidence="1" type="primary">rplB</name>
    <name type="ordered locus">RrIowa_1194</name>
</gene>
<proteinExistence type="inferred from homology"/>
<sequence>MALKNFNPITPSLRELVQVDKTSLWKGRPLKSLTKGISKTGGRNNQGRITSWHRGGGHKKLYRIIDFKRNKIDVSAIVERIEYDPNRTAFIALIKYEDGEYSYILAPQKLSVGDRVISSQDADIKIGNCLPLKCIPIGTTLHNVEMKVGKGGQIARSAGTSVDLVGKDSGYAQIKLRSGEFRLVPLDCKATIGSISNPDQKNINLGKAGRNRWLGWRPHVRGVAMNPVDHPHGGGEGKTSGGRHPVTPWGFPTKGKKTRKNKRTSKFIVKKRK</sequence>
<protein>
    <recommendedName>
        <fullName evidence="1">Large ribosomal subunit protein uL2</fullName>
    </recommendedName>
    <alternativeName>
        <fullName evidence="3">50S ribosomal protein L2</fullName>
    </alternativeName>
</protein>
<keyword id="KW-0687">Ribonucleoprotein</keyword>
<keyword id="KW-0689">Ribosomal protein</keyword>
<keyword id="KW-0694">RNA-binding</keyword>
<keyword id="KW-0699">rRNA-binding</keyword>
<name>RL2_RICRO</name>
<evidence type="ECO:0000255" key="1">
    <source>
        <dbReference type="HAMAP-Rule" id="MF_01320"/>
    </source>
</evidence>
<evidence type="ECO:0000256" key="2">
    <source>
        <dbReference type="SAM" id="MobiDB-lite"/>
    </source>
</evidence>
<evidence type="ECO:0000305" key="3"/>
<reference key="1">
    <citation type="journal article" date="2008" name="Infect. Immun.">
        <title>Genomic comparison of virulent Rickettsia rickettsii Sheila Smith and avirulent Rickettsia rickettsii Iowa.</title>
        <authorList>
            <person name="Ellison D.W."/>
            <person name="Clark T.R."/>
            <person name="Sturdevant D.E."/>
            <person name="Virtaneva K."/>
            <person name="Porcella S.F."/>
            <person name="Hackstadt T."/>
        </authorList>
    </citation>
    <scope>NUCLEOTIDE SEQUENCE [LARGE SCALE GENOMIC DNA]</scope>
    <source>
        <strain>Iowa</strain>
    </source>
</reference>
<organism>
    <name type="scientific">Rickettsia rickettsii (strain Iowa)</name>
    <dbReference type="NCBI Taxonomy" id="452659"/>
    <lineage>
        <taxon>Bacteria</taxon>
        <taxon>Pseudomonadati</taxon>
        <taxon>Pseudomonadota</taxon>
        <taxon>Alphaproteobacteria</taxon>
        <taxon>Rickettsiales</taxon>
        <taxon>Rickettsiaceae</taxon>
        <taxon>Rickettsieae</taxon>
        <taxon>Rickettsia</taxon>
        <taxon>spotted fever group</taxon>
    </lineage>
</organism>
<accession>B0BUQ7</accession>
<comment type="function">
    <text evidence="1">One of the primary rRNA binding proteins. Required for association of the 30S and 50S subunits to form the 70S ribosome, for tRNA binding and peptide bond formation. It has been suggested to have peptidyltransferase activity; this is somewhat controversial. Makes several contacts with the 16S rRNA in the 70S ribosome.</text>
</comment>
<comment type="subunit">
    <text evidence="1">Part of the 50S ribosomal subunit. Forms a bridge to the 30S subunit in the 70S ribosome.</text>
</comment>
<comment type="similarity">
    <text evidence="1">Belongs to the universal ribosomal protein uL2 family.</text>
</comment>
<dbReference type="EMBL" id="CP000766">
    <property type="protein sequence ID" value="ABY72967.1"/>
    <property type="molecule type" value="Genomic_DNA"/>
</dbReference>
<dbReference type="RefSeq" id="WP_012151149.1">
    <property type="nucleotide sequence ID" value="NC_010263.3"/>
</dbReference>
<dbReference type="SMR" id="B0BUQ7"/>
<dbReference type="GeneID" id="79937667"/>
<dbReference type="KEGG" id="rrj:RrIowa_1194"/>
<dbReference type="eggNOG" id="COG0090">
    <property type="taxonomic scope" value="Bacteria"/>
</dbReference>
<dbReference type="HOGENOM" id="CLU_036235_2_1_5"/>
<dbReference type="Proteomes" id="UP000000796">
    <property type="component" value="Chromosome"/>
</dbReference>
<dbReference type="GO" id="GO:0015934">
    <property type="term" value="C:large ribosomal subunit"/>
    <property type="evidence" value="ECO:0007669"/>
    <property type="project" value="InterPro"/>
</dbReference>
<dbReference type="GO" id="GO:0019843">
    <property type="term" value="F:rRNA binding"/>
    <property type="evidence" value="ECO:0007669"/>
    <property type="project" value="UniProtKB-UniRule"/>
</dbReference>
<dbReference type="GO" id="GO:0003735">
    <property type="term" value="F:structural constituent of ribosome"/>
    <property type="evidence" value="ECO:0007669"/>
    <property type="project" value="InterPro"/>
</dbReference>
<dbReference type="GO" id="GO:0016740">
    <property type="term" value="F:transferase activity"/>
    <property type="evidence" value="ECO:0007669"/>
    <property type="project" value="InterPro"/>
</dbReference>
<dbReference type="GO" id="GO:0006412">
    <property type="term" value="P:translation"/>
    <property type="evidence" value="ECO:0007669"/>
    <property type="project" value="UniProtKB-UniRule"/>
</dbReference>
<dbReference type="FunFam" id="2.30.30.30:FF:000001">
    <property type="entry name" value="50S ribosomal protein L2"/>
    <property type="match status" value="1"/>
</dbReference>
<dbReference type="FunFam" id="2.40.50.140:FF:000003">
    <property type="entry name" value="50S ribosomal protein L2"/>
    <property type="match status" value="1"/>
</dbReference>
<dbReference type="FunFam" id="4.10.950.10:FF:000001">
    <property type="entry name" value="50S ribosomal protein L2"/>
    <property type="match status" value="1"/>
</dbReference>
<dbReference type="Gene3D" id="2.30.30.30">
    <property type="match status" value="1"/>
</dbReference>
<dbReference type="Gene3D" id="2.40.50.140">
    <property type="entry name" value="Nucleic acid-binding proteins"/>
    <property type="match status" value="1"/>
</dbReference>
<dbReference type="Gene3D" id="4.10.950.10">
    <property type="entry name" value="Ribosomal protein L2, domain 3"/>
    <property type="match status" value="1"/>
</dbReference>
<dbReference type="HAMAP" id="MF_01320_B">
    <property type="entry name" value="Ribosomal_uL2_B"/>
    <property type="match status" value="1"/>
</dbReference>
<dbReference type="InterPro" id="IPR012340">
    <property type="entry name" value="NA-bd_OB-fold"/>
</dbReference>
<dbReference type="InterPro" id="IPR014722">
    <property type="entry name" value="Rib_uL2_dom2"/>
</dbReference>
<dbReference type="InterPro" id="IPR002171">
    <property type="entry name" value="Ribosomal_uL2"/>
</dbReference>
<dbReference type="InterPro" id="IPR005880">
    <property type="entry name" value="Ribosomal_uL2_bac/org-type"/>
</dbReference>
<dbReference type="InterPro" id="IPR022669">
    <property type="entry name" value="Ribosomal_uL2_C"/>
</dbReference>
<dbReference type="InterPro" id="IPR022671">
    <property type="entry name" value="Ribosomal_uL2_CS"/>
</dbReference>
<dbReference type="InterPro" id="IPR014726">
    <property type="entry name" value="Ribosomal_uL2_dom3"/>
</dbReference>
<dbReference type="InterPro" id="IPR022666">
    <property type="entry name" value="Ribosomal_uL2_RNA-bd_dom"/>
</dbReference>
<dbReference type="InterPro" id="IPR008991">
    <property type="entry name" value="Translation_prot_SH3-like_sf"/>
</dbReference>
<dbReference type="NCBIfam" id="TIGR01171">
    <property type="entry name" value="rplB_bact"/>
    <property type="match status" value="1"/>
</dbReference>
<dbReference type="PANTHER" id="PTHR13691:SF5">
    <property type="entry name" value="LARGE RIBOSOMAL SUBUNIT PROTEIN UL2M"/>
    <property type="match status" value="1"/>
</dbReference>
<dbReference type="PANTHER" id="PTHR13691">
    <property type="entry name" value="RIBOSOMAL PROTEIN L2"/>
    <property type="match status" value="1"/>
</dbReference>
<dbReference type="Pfam" id="PF00181">
    <property type="entry name" value="Ribosomal_L2"/>
    <property type="match status" value="1"/>
</dbReference>
<dbReference type="Pfam" id="PF03947">
    <property type="entry name" value="Ribosomal_L2_C"/>
    <property type="match status" value="1"/>
</dbReference>
<dbReference type="PIRSF" id="PIRSF002158">
    <property type="entry name" value="Ribosomal_L2"/>
    <property type="match status" value="1"/>
</dbReference>
<dbReference type="SMART" id="SM01383">
    <property type="entry name" value="Ribosomal_L2"/>
    <property type="match status" value="1"/>
</dbReference>
<dbReference type="SMART" id="SM01382">
    <property type="entry name" value="Ribosomal_L2_C"/>
    <property type="match status" value="1"/>
</dbReference>
<dbReference type="SUPFAM" id="SSF50249">
    <property type="entry name" value="Nucleic acid-binding proteins"/>
    <property type="match status" value="1"/>
</dbReference>
<dbReference type="SUPFAM" id="SSF50104">
    <property type="entry name" value="Translation proteins SH3-like domain"/>
    <property type="match status" value="1"/>
</dbReference>
<dbReference type="PROSITE" id="PS00467">
    <property type="entry name" value="RIBOSOMAL_L2"/>
    <property type="match status" value="1"/>
</dbReference>